<feature type="chain" id="PRO_1000129457" description="Quinolinate synthase">
    <location>
        <begin position="1"/>
        <end position="367"/>
    </location>
</feature>
<feature type="binding site" evidence="1">
    <location>
        <position position="45"/>
    </location>
    <ligand>
        <name>iminosuccinate</name>
        <dbReference type="ChEBI" id="CHEBI:77875"/>
    </ligand>
</feature>
<feature type="binding site" evidence="1">
    <location>
        <position position="62"/>
    </location>
    <ligand>
        <name>iminosuccinate</name>
        <dbReference type="ChEBI" id="CHEBI:77875"/>
    </ligand>
</feature>
<feature type="binding site" evidence="1">
    <location>
        <position position="109"/>
    </location>
    <ligand>
        <name>[4Fe-4S] cluster</name>
        <dbReference type="ChEBI" id="CHEBI:49883"/>
    </ligand>
</feature>
<feature type="binding site" evidence="1">
    <location>
        <begin position="140"/>
        <end position="142"/>
    </location>
    <ligand>
        <name>iminosuccinate</name>
        <dbReference type="ChEBI" id="CHEBI:77875"/>
    </ligand>
</feature>
<feature type="binding site" evidence="1">
    <location>
        <position position="161"/>
    </location>
    <ligand>
        <name>iminosuccinate</name>
        <dbReference type="ChEBI" id="CHEBI:77875"/>
    </ligand>
</feature>
<feature type="binding site" evidence="1">
    <location>
        <position position="229"/>
    </location>
    <ligand>
        <name>[4Fe-4S] cluster</name>
        <dbReference type="ChEBI" id="CHEBI:49883"/>
    </ligand>
</feature>
<feature type="binding site" evidence="1">
    <location>
        <begin position="255"/>
        <end position="257"/>
    </location>
    <ligand>
        <name>iminosuccinate</name>
        <dbReference type="ChEBI" id="CHEBI:77875"/>
    </ligand>
</feature>
<feature type="binding site" evidence="1">
    <location>
        <position position="272"/>
    </location>
    <ligand>
        <name>iminosuccinate</name>
        <dbReference type="ChEBI" id="CHEBI:77875"/>
    </ligand>
</feature>
<feature type="binding site" evidence="1">
    <location>
        <position position="319"/>
    </location>
    <ligand>
        <name>[4Fe-4S] cluster</name>
        <dbReference type="ChEBI" id="CHEBI:49883"/>
    </ligand>
</feature>
<organism>
    <name type="scientific">Lysinibacillus sphaericus (strain C3-41)</name>
    <dbReference type="NCBI Taxonomy" id="444177"/>
    <lineage>
        <taxon>Bacteria</taxon>
        <taxon>Bacillati</taxon>
        <taxon>Bacillota</taxon>
        <taxon>Bacilli</taxon>
        <taxon>Bacillales</taxon>
        <taxon>Bacillaceae</taxon>
        <taxon>Lysinibacillus</taxon>
    </lineage>
</organism>
<accession>B1HY35</accession>
<keyword id="KW-0004">4Fe-4S</keyword>
<keyword id="KW-0963">Cytoplasm</keyword>
<keyword id="KW-0408">Iron</keyword>
<keyword id="KW-0411">Iron-sulfur</keyword>
<keyword id="KW-0479">Metal-binding</keyword>
<keyword id="KW-0662">Pyridine nucleotide biosynthesis</keyword>
<keyword id="KW-0808">Transferase</keyword>
<protein>
    <recommendedName>
        <fullName evidence="1">Quinolinate synthase</fullName>
        <ecNumber evidence="1">2.5.1.72</ecNumber>
    </recommendedName>
</protein>
<evidence type="ECO:0000255" key="1">
    <source>
        <dbReference type="HAMAP-Rule" id="MF_00569"/>
    </source>
</evidence>
<name>NADA_LYSSC</name>
<sequence length="367" mass="41422">MSITSLLQQTTLLPEHYRALSITEMESRILSIKKKLGSKLFIPGHHYQKDEVIQFADATGDSLQLAQLSAANKEAEHIVFCGVHFMAETADMLTSKRQHVYLPDMRAGCSMADMADIYQTEQAWPILQQLFGDTITPLTYVNSTAAIKAFTGRHGGACVTSSNAKELVQWAFTQKQRIFFLPDQHLGRNTAYDLGVPLENMAVWNPHKNILETKQPIENIQVILWKGHCSVHEGFTVQHTETVRKEYPSMRIIVHPECSREVVDAADDAGSTKYIIDTINQAPSGSAWAIGTEMNLVNRIIKQHPDKQIISLNENFCPCLTMNRIDLPHLLWCLESIDHGQPHNRIQVDDHTSKEALSSLERMLARR</sequence>
<reference key="1">
    <citation type="journal article" date="2008" name="J. Bacteriol.">
        <title>Complete genome sequence of the mosquitocidal bacterium Bacillus sphaericus C3-41 and comparison with those of closely related Bacillus species.</title>
        <authorList>
            <person name="Hu X."/>
            <person name="Fan W."/>
            <person name="Han B."/>
            <person name="Liu H."/>
            <person name="Zheng D."/>
            <person name="Li Q."/>
            <person name="Dong W."/>
            <person name="Yan J."/>
            <person name="Gao M."/>
            <person name="Berry C."/>
            <person name="Yuan Z."/>
        </authorList>
    </citation>
    <scope>NUCLEOTIDE SEQUENCE [LARGE SCALE GENOMIC DNA]</scope>
    <source>
        <strain>C3-41</strain>
    </source>
</reference>
<dbReference type="EC" id="2.5.1.72" evidence="1"/>
<dbReference type="EMBL" id="CP000817">
    <property type="protein sequence ID" value="ACA41750.1"/>
    <property type="molecule type" value="Genomic_DNA"/>
</dbReference>
<dbReference type="RefSeq" id="WP_012295778.1">
    <property type="nucleotide sequence ID" value="NC_010382.1"/>
</dbReference>
<dbReference type="SMR" id="B1HY35"/>
<dbReference type="EnsemblBacteria" id="ACA41750">
    <property type="protein sequence ID" value="ACA41750"/>
    <property type="gene ID" value="Bsph_4291"/>
</dbReference>
<dbReference type="KEGG" id="lsp:Bsph_4291"/>
<dbReference type="HOGENOM" id="CLU_047382_2_0_9"/>
<dbReference type="UniPathway" id="UPA00253">
    <property type="reaction ID" value="UER00327"/>
</dbReference>
<dbReference type="Proteomes" id="UP000002164">
    <property type="component" value="Chromosome"/>
</dbReference>
<dbReference type="GO" id="GO:0005829">
    <property type="term" value="C:cytosol"/>
    <property type="evidence" value="ECO:0007669"/>
    <property type="project" value="TreeGrafter"/>
</dbReference>
<dbReference type="GO" id="GO:0051539">
    <property type="term" value="F:4 iron, 4 sulfur cluster binding"/>
    <property type="evidence" value="ECO:0007669"/>
    <property type="project" value="UniProtKB-KW"/>
</dbReference>
<dbReference type="GO" id="GO:0046872">
    <property type="term" value="F:metal ion binding"/>
    <property type="evidence" value="ECO:0007669"/>
    <property type="project" value="UniProtKB-KW"/>
</dbReference>
<dbReference type="GO" id="GO:0008987">
    <property type="term" value="F:quinolinate synthetase A activity"/>
    <property type="evidence" value="ECO:0007669"/>
    <property type="project" value="UniProtKB-UniRule"/>
</dbReference>
<dbReference type="GO" id="GO:0034628">
    <property type="term" value="P:'de novo' NAD biosynthetic process from L-aspartate"/>
    <property type="evidence" value="ECO:0007669"/>
    <property type="project" value="TreeGrafter"/>
</dbReference>
<dbReference type="FunFam" id="3.40.50.10800:FF:000001">
    <property type="entry name" value="Quinolinate synthase A"/>
    <property type="match status" value="1"/>
</dbReference>
<dbReference type="Gene3D" id="3.40.50.10800">
    <property type="entry name" value="NadA-like"/>
    <property type="match status" value="3"/>
</dbReference>
<dbReference type="HAMAP" id="MF_00569">
    <property type="entry name" value="NadA_type3"/>
    <property type="match status" value="1"/>
</dbReference>
<dbReference type="InterPro" id="IPR003473">
    <property type="entry name" value="NadA"/>
</dbReference>
<dbReference type="InterPro" id="IPR036094">
    <property type="entry name" value="NadA_sf"/>
</dbReference>
<dbReference type="InterPro" id="IPR023515">
    <property type="entry name" value="Quinolinate_synth_A_type3"/>
</dbReference>
<dbReference type="NCBIfam" id="TIGR00550">
    <property type="entry name" value="nadA"/>
    <property type="match status" value="1"/>
</dbReference>
<dbReference type="NCBIfam" id="NF006880">
    <property type="entry name" value="PRK09375.2-1"/>
    <property type="match status" value="1"/>
</dbReference>
<dbReference type="NCBIfam" id="NF006883">
    <property type="entry name" value="PRK09375.2-4"/>
    <property type="match status" value="1"/>
</dbReference>
<dbReference type="PANTHER" id="PTHR30573:SF0">
    <property type="entry name" value="QUINOLINATE SYNTHASE, CHLOROPLASTIC"/>
    <property type="match status" value="1"/>
</dbReference>
<dbReference type="PANTHER" id="PTHR30573">
    <property type="entry name" value="QUINOLINATE SYNTHETASE A"/>
    <property type="match status" value="1"/>
</dbReference>
<dbReference type="Pfam" id="PF02445">
    <property type="entry name" value="NadA"/>
    <property type="match status" value="1"/>
</dbReference>
<dbReference type="SUPFAM" id="SSF142754">
    <property type="entry name" value="NadA-like"/>
    <property type="match status" value="1"/>
</dbReference>
<proteinExistence type="inferred from homology"/>
<gene>
    <name evidence="1" type="primary">nadA</name>
    <name type="ordered locus">Bsph_4291</name>
</gene>
<comment type="function">
    <text evidence="1">Catalyzes the condensation of iminoaspartate with dihydroxyacetone phosphate to form quinolinate.</text>
</comment>
<comment type="catalytic activity">
    <reaction evidence="1">
        <text>iminosuccinate + dihydroxyacetone phosphate = quinolinate + phosphate + 2 H2O + H(+)</text>
        <dbReference type="Rhea" id="RHEA:25888"/>
        <dbReference type="ChEBI" id="CHEBI:15377"/>
        <dbReference type="ChEBI" id="CHEBI:15378"/>
        <dbReference type="ChEBI" id="CHEBI:29959"/>
        <dbReference type="ChEBI" id="CHEBI:43474"/>
        <dbReference type="ChEBI" id="CHEBI:57642"/>
        <dbReference type="ChEBI" id="CHEBI:77875"/>
        <dbReference type="EC" id="2.5.1.72"/>
    </reaction>
    <physiologicalReaction direction="left-to-right" evidence="1">
        <dbReference type="Rhea" id="RHEA:25889"/>
    </physiologicalReaction>
</comment>
<comment type="cofactor">
    <cofactor evidence="1">
        <name>[4Fe-4S] cluster</name>
        <dbReference type="ChEBI" id="CHEBI:49883"/>
    </cofactor>
    <text evidence="1">Binds 1 [4Fe-4S] cluster per subunit.</text>
</comment>
<comment type="pathway">
    <text evidence="1">Cofactor biosynthesis; NAD(+) biosynthesis; quinolinate from iminoaspartate: step 1/1.</text>
</comment>
<comment type="subcellular location">
    <subcellularLocation>
        <location evidence="1">Cytoplasm</location>
    </subcellularLocation>
</comment>
<comment type="similarity">
    <text evidence="1">Belongs to the quinolinate synthase family. Type 3 subfamily.</text>
</comment>